<name>ENOA_TRASE</name>
<feature type="initiator methionine" description="Removed" evidence="1">
    <location>
        <position position="1"/>
    </location>
</feature>
<feature type="chain" id="PRO_0000134105" description="Alpha-enolase">
    <location>
        <begin position="2"/>
        <end position="434"/>
    </location>
</feature>
<feature type="active site" description="Proton donor" evidence="1">
    <location>
        <position position="210"/>
    </location>
</feature>
<feature type="binding site" evidence="1">
    <location>
        <position position="40"/>
    </location>
    <ligand>
        <name>Mg(2+)</name>
        <dbReference type="ChEBI" id="CHEBI:18420"/>
        <label>1</label>
    </ligand>
</feature>
<feature type="binding site" evidence="1">
    <location>
        <position position="158"/>
    </location>
    <ligand>
        <name>substrate</name>
    </ligand>
</feature>
<feature type="binding site" evidence="1">
    <location>
        <position position="167"/>
    </location>
    <ligand>
        <name>substrate</name>
    </ligand>
</feature>
<feature type="binding site" evidence="1">
    <location>
        <position position="245"/>
    </location>
    <ligand>
        <name>Mg(2+)</name>
        <dbReference type="ChEBI" id="CHEBI:18420"/>
        <label>2</label>
    </ligand>
</feature>
<feature type="binding site" evidence="1">
    <location>
        <position position="293"/>
    </location>
    <ligand>
        <name>Mg(2+)</name>
        <dbReference type="ChEBI" id="CHEBI:18420"/>
        <label>2</label>
    </ligand>
</feature>
<feature type="binding site" evidence="1">
    <location>
        <position position="293"/>
    </location>
    <ligand>
        <name>substrate</name>
    </ligand>
</feature>
<feature type="binding site" evidence="1">
    <location>
        <position position="318"/>
    </location>
    <ligand>
        <name>Mg(2+)</name>
        <dbReference type="ChEBI" id="CHEBI:18420"/>
        <label>2</label>
    </ligand>
</feature>
<feature type="binding site" evidence="1">
    <location>
        <position position="318"/>
    </location>
    <ligand>
        <name>substrate</name>
    </ligand>
</feature>
<feature type="binding site" evidence="1">
    <location>
        <begin position="370"/>
        <end position="373"/>
    </location>
    <ligand>
        <name>substrate</name>
    </ligand>
</feature>
<feature type="binding site" evidence="1">
    <location>
        <position position="394"/>
    </location>
    <ligand>
        <name>substrate</name>
    </ligand>
</feature>
<accession>Q9W7L1</accession>
<evidence type="ECO:0000250" key="1"/>
<evidence type="ECO:0000305" key="2"/>
<protein>
    <recommendedName>
        <fullName>Alpha-enolase</fullName>
        <ecNumber>4.2.1.11</ecNumber>
    </recommendedName>
    <alternativeName>
        <fullName>2-phospho-D-glycerate hydro-lyase</fullName>
    </alternativeName>
    <alternativeName>
        <fullName>Phosphopyruvate hydratase</fullName>
    </alternativeName>
</protein>
<sequence>MSILKIFAREIFDSRGNPTVEVDLYTSKGLFRAAVPSGASTGIYEALELRDNDKTRFLGKGVSKAVGHVNKTIAPALISKNINVVEQEKIDKLMLEMDGSENKSKFGANAILGVSLAVCKAGAAEKGVPLYRHIADLAGNPEVILPVPAFNVINGGSHAGNKLAMQEFMILPVGAESFKEAMRIGAEVYHNLKNVIKEKYGKDATNVGDEGGFAPNILEDKEALELLKTAISKAGYTDKVVIGMDVAASEFYRDGKYDLDFKSPDDPSRYITPDQLADLYKSFIKSYPLVSVEDPFDQDDWSAWKKFTATVGVQVVGDDLTVTNPKRIAKPVEEKSCNCLLLQVNQIGSVTESLQACKLAQSNGWGVMVSHRSGETEDTFIADLVVGLCTGQIKTGAPCRSERLAKYNQLLRIEEELGSKARFAGRNFRNPRIN</sequence>
<keyword id="KW-0963">Cytoplasm</keyword>
<keyword id="KW-0324">Glycolysis</keyword>
<keyword id="KW-0456">Lyase</keyword>
<keyword id="KW-0460">Magnesium</keyword>
<keyword id="KW-0479">Metal-binding</keyword>
<reference key="1">
    <citation type="journal article" date="1999" name="Mol. Phylogenet. Evol.">
        <title>Molecular evidence for a clade of turtles.</title>
        <authorList>
            <person name="Mannen H."/>
            <person name="Li S.S.-L."/>
        </authorList>
    </citation>
    <scope>NUCLEOTIDE SEQUENCE [MRNA]</scope>
    <source>
        <tissue>Muscle</tissue>
    </source>
</reference>
<organism>
    <name type="scientific">Trachemys scripta elegans</name>
    <name type="common">Red-eared slider turtle</name>
    <name type="synonym">Emys elegans</name>
    <dbReference type="NCBI Taxonomy" id="31138"/>
    <lineage>
        <taxon>Eukaryota</taxon>
        <taxon>Metazoa</taxon>
        <taxon>Chordata</taxon>
        <taxon>Craniata</taxon>
        <taxon>Vertebrata</taxon>
        <taxon>Euteleostomi</taxon>
        <taxon>Archelosauria</taxon>
        <taxon>Testudinata</taxon>
        <taxon>Testudines</taxon>
        <taxon>Cryptodira</taxon>
        <taxon>Durocryptodira</taxon>
        <taxon>Testudinoidea</taxon>
        <taxon>Emydidae</taxon>
        <taxon>Trachemys</taxon>
    </lineage>
</organism>
<comment type="catalytic activity">
    <reaction>
        <text>(2R)-2-phosphoglycerate = phosphoenolpyruvate + H2O</text>
        <dbReference type="Rhea" id="RHEA:10164"/>
        <dbReference type="ChEBI" id="CHEBI:15377"/>
        <dbReference type="ChEBI" id="CHEBI:58289"/>
        <dbReference type="ChEBI" id="CHEBI:58702"/>
        <dbReference type="EC" id="4.2.1.11"/>
    </reaction>
</comment>
<comment type="cofactor">
    <cofactor evidence="1">
        <name>Mg(2+)</name>
        <dbReference type="ChEBI" id="CHEBI:18420"/>
    </cofactor>
    <text evidence="1">Binds two Mg(2+) per subunit. Required for catalysis and for stabilizing the dimer.</text>
</comment>
<comment type="pathway">
    <text>Carbohydrate degradation; glycolysis; pyruvate from D-glyceraldehyde 3-phosphate: step 4/5.</text>
</comment>
<comment type="subunit">
    <text evidence="1">Homodimer.</text>
</comment>
<comment type="subcellular location">
    <subcellularLocation>
        <location>Cytoplasm</location>
    </subcellularLocation>
</comment>
<comment type="similarity">
    <text evidence="2">Belongs to the enolase family.</text>
</comment>
<dbReference type="EC" id="4.2.1.11"/>
<dbReference type="EMBL" id="AF072588">
    <property type="protein sequence ID" value="AAD41645.1"/>
    <property type="molecule type" value="mRNA"/>
</dbReference>
<dbReference type="SMR" id="Q9W7L1"/>
<dbReference type="SABIO-RK" id="Q9W7L1"/>
<dbReference type="UniPathway" id="UPA00109">
    <property type="reaction ID" value="UER00187"/>
</dbReference>
<dbReference type="GO" id="GO:0000015">
    <property type="term" value="C:phosphopyruvate hydratase complex"/>
    <property type="evidence" value="ECO:0007669"/>
    <property type="project" value="InterPro"/>
</dbReference>
<dbReference type="GO" id="GO:0000287">
    <property type="term" value="F:magnesium ion binding"/>
    <property type="evidence" value="ECO:0007669"/>
    <property type="project" value="InterPro"/>
</dbReference>
<dbReference type="GO" id="GO:0004634">
    <property type="term" value="F:phosphopyruvate hydratase activity"/>
    <property type="evidence" value="ECO:0007669"/>
    <property type="project" value="UniProtKB-EC"/>
</dbReference>
<dbReference type="GO" id="GO:0006096">
    <property type="term" value="P:glycolytic process"/>
    <property type="evidence" value="ECO:0007669"/>
    <property type="project" value="UniProtKB-UniPathway"/>
</dbReference>
<dbReference type="CDD" id="cd03313">
    <property type="entry name" value="enolase"/>
    <property type="match status" value="1"/>
</dbReference>
<dbReference type="FunFam" id="3.30.390.10:FF:000001">
    <property type="entry name" value="Enolase"/>
    <property type="match status" value="1"/>
</dbReference>
<dbReference type="FunFam" id="3.20.20.120:FF:000002">
    <property type="entry name" value="Enolase 1"/>
    <property type="match status" value="1"/>
</dbReference>
<dbReference type="Gene3D" id="3.20.20.120">
    <property type="entry name" value="Enolase-like C-terminal domain"/>
    <property type="match status" value="1"/>
</dbReference>
<dbReference type="Gene3D" id="3.30.390.10">
    <property type="entry name" value="Enolase-like, N-terminal domain"/>
    <property type="match status" value="1"/>
</dbReference>
<dbReference type="HAMAP" id="MF_00318">
    <property type="entry name" value="Enolase"/>
    <property type="match status" value="1"/>
</dbReference>
<dbReference type="InterPro" id="IPR000941">
    <property type="entry name" value="Enolase"/>
</dbReference>
<dbReference type="InterPro" id="IPR036849">
    <property type="entry name" value="Enolase-like_C_sf"/>
</dbReference>
<dbReference type="InterPro" id="IPR029017">
    <property type="entry name" value="Enolase-like_N"/>
</dbReference>
<dbReference type="InterPro" id="IPR020810">
    <property type="entry name" value="Enolase_C"/>
</dbReference>
<dbReference type="InterPro" id="IPR020809">
    <property type="entry name" value="Enolase_CS"/>
</dbReference>
<dbReference type="InterPro" id="IPR020811">
    <property type="entry name" value="Enolase_N"/>
</dbReference>
<dbReference type="NCBIfam" id="TIGR01060">
    <property type="entry name" value="eno"/>
    <property type="match status" value="1"/>
</dbReference>
<dbReference type="PANTHER" id="PTHR11902:SF12">
    <property type="entry name" value="ALPHA-ENOLASE"/>
    <property type="match status" value="1"/>
</dbReference>
<dbReference type="PANTHER" id="PTHR11902">
    <property type="entry name" value="ENOLASE"/>
    <property type="match status" value="1"/>
</dbReference>
<dbReference type="Pfam" id="PF00113">
    <property type="entry name" value="Enolase_C"/>
    <property type="match status" value="1"/>
</dbReference>
<dbReference type="Pfam" id="PF03952">
    <property type="entry name" value="Enolase_N"/>
    <property type="match status" value="1"/>
</dbReference>
<dbReference type="PIRSF" id="PIRSF001400">
    <property type="entry name" value="Enolase"/>
    <property type="match status" value="1"/>
</dbReference>
<dbReference type="PRINTS" id="PR00148">
    <property type="entry name" value="ENOLASE"/>
</dbReference>
<dbReference type="SFLD" id="SFLDS00001">
    <property type="entry name" value="Enolase"/>
    <property type="match status" value="1"/>
</dbReference>
<dbReference type="SMART" id="SM01192">
    <property type="entry name" value="Enolase_C"/>
    <property type="match status" value="1"/>
</dbReference>
<dbReference type="SMART" id="SM01193">
    <property type="entry name" value="Enolase_N"/>
    <property type="match status" value="1"/>
</dbReference>
<dbReference type="SUPFAM" id="SSF51604">
    <property type="entry name" value="Enolase C-terminal domain-like"/>
    <property type="match status" value="1"/>
</dbReference>
<dbReference type="SUPFAM" id="SSF54826">
    <property type="entry name" value="Enolase N-terminal domain-like"/>
    <property type="match status" value="1"/>
</dbReference>
<dbReference type="PROSITE" id="PS00164">
    <property type="entry name" value="ENOLASE"/>
    <property type="match status" value="1"/>
</dbReference>
<proteinExistence type="evidence at transcript level"/>